<proteinExistence type="inferred from homology"/>
<sequence>MRPGLSAKRLVVKVGSAVLTGERGLDLEAMAEIARQVAALREEGREVVLVSSGAVAAGMRRLGLKERPKDMPKKQALAALGQPLLMAFWQEAFAPFGLPVAQVLLTAEDLSSRSRYLNAKATLRALLDLGAIPVINENDTVAFEEIRFGDNDQLSARVAALVEAGLLALLSDVDALYEEDPKKNPQARPIPEVESVEAVLAHAGEENPLGSGGMKSKLLAARIAGRVGIPTLLLPGKRPGVLLQALSGAPLGTYFHARRRYRGEKAWLFGLLRPKGELVLDRGAVRALKERGASLLPAGVKEVRGRFSRGEAVRLLSEEGEEVGVGLANYASEEIARIKGRRSAEIEAVLGYRYTEEVVHRDHLALKEEA</sequence>
<accession>Q5SH03</accession>
<reference key="1">
    <citation type="submission" date="2004-11" db="EMBL/GenBank/DDBJ databases">
        <title>Complete genome sequence of Thermus thermophilus HB8.</title>
        <authorList>
            <person name="Masui R."/>
            <person name="Kurokawa K."/>
            <person name="Nakagawa N."/>
            <person name="Tokunaga F."/>
            <person name="Koyama Y."/>
            <person name="Shibata T."/>
            <person name="Oshima T."/>
            <person name="Yokoyama S."/>
            <person name="Yasunaga T."/>
            <person name="Kuramitsu S."/>
        </authorList>
    </citation>
    <scope>NUCLEOTIDE SEQUENCE [LARGE SCALE GENOMIC DNA]</scope>
    <source>
        <strain>ATCC 27634 / DSM 579 / HB8</strain>
    </source>
</reference>
<keyword id="KW-0028">Amino-acid biosynthesis</keyword>
<keyword id="KW-0067">ATP-binding</keyword>
<keyword id="KW-0963">Cytoplasm</keyword>
<keyword id="KW-0418">Kinase</keyword>
<keyword id="KW-0547">Nucleotide-binding</keyword>
<keyword id="KW-0641">Proline biosynthesis</keyword>
<keyword id="KW-1185">Reference proteome</keyword>
<keyword id="KW-0808">Transferase</keyword>
<organism>
    <name type="scientific">Thermus thermophilus (strain ATCC 27634 / DSM 579 / HB8)</name>
    <dbReference type="NCBI Taxonomy" id="300852"/>
    <lineage>
        <taxon>Bacteria</taxon>
        <taxon>Thermotogati</taxon>
        <taxon>Deinococcota</taxon>
        <taxon>Deinococci</taxon>
        <taxon>Thermales</taxon>
        <taxon>Thermaceae</taxon>
        <taxon>Thermus</taxon>
    </lineage>
</organism>
<name>PROB_THET8</name>
<feature type="chain" id="PRO_0000109748" description="Glutamate 5-kinase">
    <location>
        <begin position="1"/>
        <end position="370"/>
    </location>
</feature>
<feature type="domain" description="PUA" evidence="1">
    <location>
        <begin position="275"/>
        <end position="353"/>
    </location>
</feature>
<feature type="binding site" evidence="1">
    <location>
        <position position="13"/>
    </location>
    <ligand>
        <name>ATP</name>
        <dbReference type="ChEBI" id="CHEBI:30616"/>
    </ligand>
</feature>
<feature type="binding site" evidence="1">
    <location>
        <position position="52"/>
    </location>
    <ligand>
        <name>substrate</name>
    </ligand>
</feature>
<feature type="binding site" evidence="1">
    <location>
        <position position="139"/>
    </location>
    <ligand>
        <name>substrate</name>
    </ligand>
</feature>
<feature type="binding site" evidence="1">
    <location>
        <position position="151"/>
    </location>
    <ligand>
        <name>substrate</name>
    </ligand>
</feature>
<feature type="binding site" evidence="1">
    <location>
        <begin position="171"/>
        <end position="172"/>
    </location>
    <ligand>
        <name>ATP</name>
        <dbReference type="ChEBI" id="CHEBI:30616"/>
    </ligand>
</feature>
<feature type="binding site" evidence="1">
    <location>
        <begin position="211"/>
        <end position="217"/>
    </location>
    <ligand>
        <name>ATP</name>
        <dbReference type="ChEBI" id="CHEBI:30616"/>
    </ligand>
</feature>
<dbReference type="EC" id="2.7.2.11" evidence="1"/>
<dbReference type="EMBL" id="AP008226">
    <property type="protein sequence ID" value="BAD71750.1"/>
    <property type="molecule type" value="Genomic_DNA"/>
</dbReference>
<dbReference type="RefSeq" id="WP_008633899.1">
    <property type="nucleotide sequence ID" value="NC_006461.1"/>
</dbReference>
<dbReference type="RefSeq" id="YP_145193.1">
    <property type="nucleotide sequence ID" value="NC_006461.1"/>
</dbReference>
<dbReference type="SMR" id="Q5SH03"/>
<dbReference type="EnsemblBacteria" id="BAD71750">
    <property type="protein sequence ID" value="BAD71750"/>
    <property type="gene ID" value="BAD71750"/>
</dbReference>
<dbReference type="GeneID" id="3169812"/>
<dbReference type="KEGG" id="ttj:TTHA1927"/>
<dbReference type="PATRIC" id="fig|300852.9.peg.1898"/>
<dbReference type="eggNOG" id="COG0263">
    <property type="taxonomic scope" value="Bacteria"/>
</dbReference>
<dbReference type="HOGENOM" id="CLU_025400_2_0_0"/>
<dbReference type="PhylomeDB" id="Q5SH03"/>
<dbReference type="UniPathway" id="UPA00098">
    <property type="reaction ID" value="UER00359"/>
</dbReference>
<dbReference type="Proteomes" id="UP000000532">
    <property type="component" value="Chromosome"/>
</dbReference>
<dbReference type="GO" id="GO:0005829">
    <property type="term" value="C:cytosol"/>
    <property type="evidence" value="ECO:0007669"/>
    <property type="project" value="TreeGrafter"/>
</dbReference>
<dbReference type="GO" id="GO:0005524">
    <property type="term" value="F:ATP binding"/>
    <property type="evidence" value="ECO:0007669"/>
    <property type="project" value="UniProtKB-KW"/>
</dbReference>
<dbReference type="GO" id="GO:0004349">
    <property type="term" value="F:glutamate 5-kinase activity"/>
    <property type="evidence" value="ECO:0007669"/>
    <property type="project" value="UniProtKB-UniRule"/>
</dbReference>
<dbReference type="GO" id="GO:0003723">
    <property type="term" value="F:RNA binding"/>
    <property type="evidence" value="ECO:0007669"/>
    <property type="project" value="InterPro"/>
</dbReference>
<dbReference type="GO" id="GO:0055129">
    <property type="term" value="P:L-proline biosynthetic process"/>
    <property type="evidence" value="ECO:0007669"/>
    <property type="project" value="UniProtKB-UniRule"/>
</dbReference>
<dbReference type="CDD" id="cd04242">
    <property type="entry name" value="AAK_G5K_ProB"/>
    <property type="match status" value="1"/>
</dbReference>
<dbReference type="CDD" id="cd21157">
    <property type="entry name" value="PUA_G5K"/>
    <property type="match status" value="1"/>
</dbReference>
<dbReference type="FunFam" id="2.30.130.10:FF:000007">
    <property type="entry name" value="Glutamate 5-kinase"/>
    <property type="match status" value="1"/>
</dbReference>
<dbReference type="FunFam" id="3.40.1160.10:FF:000018">
    <property type="entry name" value="Glutamate 5-kinase"/>
    <property type="match status" value="1"/>
</dbReference>
<dbReference type="Gene3D" id="3.40.1160.10">
    <property type="entry name" value="Acetylglutamate kinase-like"/>
    <property type="match status" value="1"/>
</dbReference>
<dbReference type="Gene3D" id="2.30.130.10">
    <property type="entry name" value="PUA domain"/>
    <property type="match status" value="1"/>
</dbReference>
<dbReference type="HAMAP" id="MF_00456">
    <property type="entry name" value="ProB"/>
    <property type="match status" value="1"/>
</dbReference>
<dbReference type="InterPro" id="IPR036393">
    <property type="entry name" value="AceGlu_kinase-like_sf"/>
</dbReference>
<dbReference type="InterPro" id="IPR001048">
    <property type="entry name" value="Asp/Glu/Uridylate_kinase"/>
</dbReference>
<dbReference type="InterPro" id="IPR041739">
    <property type="entry name" value="G5K_ProB"/>
</dbReference>
<dbReference type="InterPro" id="IPR001057">
    <property type="entry name" value="Glu/AcGlu_kinase"/>
</dbReference>
<dbReference type="InterPro" id="IPR011529">
    <property type="entry name" value="Glu_5kinase"/>
</dbReference>
<dbReference type="InterPro" id="IPR005715">
    <property type="entry name" value="Glu_5kinase/COase_Synthase"/>
</dbReference>
<dbReference type="InterPro" id="IPR019797">
    <property type="entry name" value="Glutamate_5-kinase_CS"/>
</dbReference>
<dbReference type="InterPro" id="IPR002478">
    <property type="entry name" value="PUA"/>
</dbReference>
<dbReference type="InterPro" id="IPR015947">
    <property type="entry name" value="PUA-like_sf"/>
</dbReference>
<dbReference type="InterPro" id="IPR036974">
    <property type="entry name" value="PUA_sf"/>
</dbReference>
<dbReference type="NCBIfam" id="TIGR01027">
    <property type="entry name" value="proB"/>
    <property type="match status" value="1"/>
</dbReference>
<dbReference type="PANTHER" id="PTHR43654">
    <property type="entry name" value="GLUTAMATE 5-KINASE"/>
    <property type="match status" value="1"/>
</dbReference>
<dbReference type="PANTHER" id="PTHR43654:SF1">
    <property type="entry name" value="ISOPENTENYL PHOSPHATE KINASE"/>
    <property type="match status" value="1"/>
</dbReference>
<dbReference type="Pfam" id="PF00696">
    <property type="entry name" value="AA_kinase"/>
    <property type="match status" value="1"/>
</dbReference>
<dbReference type="Pfam" id="PF01472">
    <property type="entry name" value="PUA"/>
    <property type="match status" value="1"/>
</dbReference>
<dbReference type="PIRSF" id="PIRSF000729">
    <property type="entry name" value="GK"/>
    <property type="match status" value="1"/>
</dbReference>
<dbReference type="PRINTS" id="PR00474">
    <property type="entry name" value="GLU5KINASE"/>
</dbReference>
<dbReference type="SMART" id="SM00359">
    <property type="entry name" value="PUA"/>
    <property type="match status" value="1"/>
</dbReference>
<dbReference type="SUPFAM" id="SSF53633">
    <property type="entry name" value="Carbamate kinase-like"/>
    <property type="match status" value="1"/>
</dbReference>
<dbReference type="SUPFAM" id="SSF88697">
    <property type="entry name" value="PUA domain-like"/>
    <property type="match status" value="1"/>
</dbReference>
<dbReference type="PROSITE" id="PS00902">
    <property type="entry name" value="GLUTAMATE_5_KINASE"/>
    <property type="match status" value="1"/>
</dbReference>
<dbReference type="PROSITE" id="PS50890">
    <property type="entry name" value="PUA"/>
    <property type="match status" value="1"/>
</dbReference>
<gene>
    <name evidence="1" type="primary">proB</name>
    <name type="ordered locus">TTHA1927</name>
</gene>
<evidence type="ECO:0000255" key="1">
    <source>
        <dbReference type="HAMAP-Rule" id="MF_00456"/>
    </source>
</evidence>
<comment type="function">
    <text evidence="1">Catalyzes the transfer of a phosphate group to glutamate to form L-glutamate 5-phosphate.</text>
</comment>
<comment type="catalytic activity">
    <reaction evidence="1">
        <text>L-glutamate + ATP = L-glutamyl 5-phosphate + ADP</text>
        <dbReference type="Rhea" id="RHEA:14877"/>
        <dbReference type="ChEBI" id="CHEBI:29985"/>
        <dbReference type="ChEBI" id="CHEBI:30616"/>
        <dbReference type="ChEBI" id="CHEBI:58274"/>
        <dbReference type="ChEBI" id="CHEBI:456216"/>
        <dbReference type="EC" id="2.7.2.11"/>
    </reaction>
</comment>
<comment type="pathway">
    <text evidence="1">Amino-acid biosynthesis; L-proline biosynthesis; L-glutamate 5-semialdehyde from L-glutamate: step 1/2.</text>
</comment>
<comment type="subcellular location">
    <subcellularLocation>
        <location evidence="1">Cytoplasm</location>
    </subcellularLocation>
</comment>
<comment type="similarity">
    <text evidence="1">Belongs to the glutamate 5-kinase family.</text>
</comment>
<protein>
    <recommendedName>
        <fullName evidence="1">Glutamate 5-kinase</fullName>
        <ecNumber evidence="1">2.7.2.11</ecNumber>
    </recommendedName>
    <alternativeName>
        <fullName evidence="1">Gamma-glutamyl kinase</fullName>
        <shortName evidence="1">GK</shortName>
    </alternativeName>
</protein>